<keyword id="KW-0106">Calcium</keyword>
<keyword id="KW-0903">Direct protein sequencing</keyword>
<keyword id="KW-1015">Disulfide bond</keyword>
<keyword id="KW-0456">Lyase</keyword>
<keyword id="KW-0479">Metal-binding</keyword>
<keyword id="KW-1185">Reference proteome</keyword>
<keyword id="KW-0964">Secreted</keyword>
<keyword id="KW-0732">Signal</keyword>
<accession>Q6CZT4</accession>
<accession>P11430</accession>
<accession>P16529</accession>
<accession>Q06113</accession>
<accession>Q47468</accession>
<protein>
    <recommendedName>
        <fullName>Pectate lyase 1</fullName>
        <ecNumber>4.2.2.2</ecNumber>
    </recommendedName>
    <alternativeName>
        <fullName>Pectate lyase A</fullName>
        <shortName>PLA</shortName>
    </alternativeName>
    <alternativeName>
        <fullName>Pectate lyase I</fullName>
        <shortName>PEL I</shortName>
    </alternativeName>
</protein>
<feature type="signal peptide" evidence="3">
    <location>
        <begin position="1"/>
        <end position="22"/>
    </location>
</feature>
<feature type="chain" id="PRO_0000234448" description="Pectate lyase 1">
    <location>
        <begin position="23"/>
        <end position="374"/>
    </location>
</feature>
<feature type="active site" evidence="2">
    <location>
        <position position="239"/>
    </location>
</feature>
<feature type="binding site" evidence="1">
    <location>
        <position position="150"/>
    </location>
    <ligand>
        <name>Ca(2+)</name>
        <dbReference type="ChEBI" id="CHEBI:29108"/>
    </ligand>
</feature>
<feature type="binding site" evidence="1">
    <location>
        <position position="152"/>
    </location>
    <ligand>
        <name>Ca(2+)</name>
        <dbReference type="ChEBI" id="CHEBI:29108"/>
    </ligand>
</feature>
<feature type="binding site" evidence="1">
    <location>
        <position position="187"/>
    </location>
    <ligand>
        <name>Ca(2+)</name>
        <dbReference type="ChEBI" id="CHEBI:29108"/>
    </ligand>
</feature>
<feature type="binding site" evidence="1">
    <location>
        <position position="191"/>
    </location>
    <ligand>
        <name>Ca(2+)</name>
        <dbReference type="ChEBI" id="CHEBI:29108"/>
    </ligand>
</feature>
<feature type="disulfide bond" evidence="1">
    <location>
        <begin position="93"/>
        <end position="176"/>
    </location>
</feature>
<feature type="disulfide bond" evidence="1">
    <location>
        <begin position="350"/>
        <end position="373"/>
    </location>
</feature>
<feature type="sequence conflict" description="In Ref. 2; CAA57439." evidence="4" ref="2">
    <original>L</original>
    <variation>V</variation>
    <location>
        <position position="13"/>
    </location>
</feature>
<feature type="sequence conflict" description="In Ref. 1; AA sequence." evidence="4" ref="1">
    <original>VDIIEAAKKDSSGKVV</original>
    <variation>INLIEEAQLDSKGKKL</variation>
    <location>
        <begin position="51"/>
        <end position="66"/>
    </location>
</feature>
<feature type="sequence conflict" description="In Ref. 2; CAA57439." evidence="4" ref="2">
    <original>V</original>
    <variation>A</variation>
    <location>
        <position position="65"/>
    </location>
</feature>
<feature type="sequence conflict" description="In Ref. 1; AAA24845 and 2; CAA57439." evidence="4" ref="1 2">
    <original>F</original>
    <variation>Y</variation>
    <location>
        <position position="71"/>
    </location>
</feature>
<feature type="sequence conflict" description="In Ref. 1; AAA24845." evidence="4" ref="1">
    <original>I</original>
    <variation>L</variation>
    <location>
        <position position="112"/>
    </location>
</feature>
<feature type="sequence conflict" description="In Ref. 1; AAA24845." evidence="4" ref="1">
    <original>V</original>
    <variation>L</variation>
    <location>
        <position position="128"/>
    </location>
</feature>
<feature type="sequence conflict" description="In Ref. 2; CAA57439." evidence="4" ref="2">
    <original>V</original>
    <variation>M</variation>
    <location>
        <position position="128"/>
    </location>
</feature>
<feature type="sequence conflict" description="In Ref. 2; CAA57439." evidence="4" ref="2">
    <original>V</original>
    <variation>I</variation>
    <location>
        <position position="135"/>
    </location>
</feature>
<feature type="sequence conflict" description="In Ref. 1; AAA24845." evidence="4" ref="1">
    <original>I</original>
    <variation>V</variation>
    <location>
        <position position="154"/>
    </location>
</feature>
<feature type="sequence conflict" description="In Ref. 1; AAA24845." evidence="4" ref="1">
    <original>A</original>
    <variation>G</variation>
    <location>
        <position position="195"/>
    </location>
</feature>
<feature type="sequence conflict" description="In Ref. 1; AAA24845 and 2; CAA57439." evidence="4" ref="1 2">
    <original>F</original>
    <variation>Y</variation>
    <location>
        <position position="205"/>
    </location>
</feature>
<feature type="sequence conflict" description="In Ref. 1; AAA24845." evidence="4" ref="1">
    <original>Y</original>
    <variation>H</variation>
    <location>
        <position position="228"/>
    </location>
</feature>
<feature type="sequence conflict" description="In Ref. 1; AAA24845." evidence="4" ref="1">
    <original>Y</original>
    <variation>H</variation>
    <location>
        <position position="233"/>
    </location>
</feature>
<feature type="sequence conflict" description="In Ref. 1; AAA24845." evidence="4" ref="1">
    <original>N</original>
    <variation>T</variation>
    <location>
        <position position="252"/>
    </location>
</feature>
<feature type="sequence conflict" description="In Ref. 2; CAA57439." evidence="4" ref="2">
    <original>D</original>
    <variation>G</variation>
    <location>
        <position position="256"/>
    </location>
</feature>
<feature type="sequence conflict" description="In Ref. 2; CAA57439." evidence="4" ref="2">
    <original>K</original>
    <variation>N</variation>
    <location>
        <position position="314"/>
    </location>
</feature>
<feature type="sequence conflict" description="In Ref. 1; AAA24845 and 2; CAA57439." evidence="4" ref="1 2">
    <original>S</original>
    <variation>P</variation>
    <location>
        <position position="340"/>
    </location>
</feature>
<feature type="sequence conflict" description="In Ref. 2; CAA57439." evidence="4" ref="2">
    <original>N</original>
    <variation>S</variation>
    <location>
        <position position="357"/>
    </location>
</feature>
<sequence>MKYLLPSAAAGLLLLAAQPTMAANTGGYATTDGGDVSGAVKKTARSLQEIVDIIEAAKKDSSGKVVKGGAFPLVITYNGNEDALIKAAEANICGQWSKDPRGVEIKEFTKGITILGTNGSSANFGIWVVNSSNVVVRNMRFGYMPGGAKDGDAIRIDNSPNVWIDHNEIFAKNFECAGTPDNDTTFESAVDIKKASTNVTVSYNFIHGVKKVGLSGSSNTDTGRNLTYHHNIYSDVNSRLPLQRGGQVHAYNNLYDGIKSSGFNVRQKGIALIESNWFENALNPVTARNDDSNFGTWELRNNNITSPSDFAKYKITWGKPSTPHINADDWKSTGKFPAVSYSYSPVSAQCVKDKLANYAGVGKNQAVLTAANCK</sequence>
<dbReference type="EC" id="4.2.2.2"/>
<dbReference type="EMBL" id="M18859">
    <property type="protein sequence ID" value="AAA24845.1"/>
    <property type="status" value="ALT_INIT"/>
    <property type="molecule type" value="Genomic_DNA"/>
</dbReference>
<dbReference type="EMBL" id="X81847">
    <property type="protein sequence ID" value="CAA57439.1"/>
    <property type="molecule type" value="Genomic_DNA"/>
</dbReference>
<dbReference type="EMBL" id="BX950851">
    <property type="protein sequence ID" value="CAG76964.1"/>
    <property type="molecule type" value="Genomic_DNA"/>
</dbReference>
<dbReference type="PIR" id="JT0242">
    <property type="entry name" value="WZWCP1"/>
</dbReference>
<dbReference type="RefSeq" id="WP_011095541.1">
    <property type="nucleotide sequence ID" value="NC_004547.2"/>
</dbReference>
<dbReference type="SMR" id="Q6CZT4"/>
<dbReference type="STRING" id="218491.ECA4067"/>
<dbReference type="CAZy" id="PL1">
    <property type="family name" value="Polysaccharide Lyase Family 1"/>
</dbReference>
<dbReference type="GeneID" id="57210731"/>
<dbReference type="KEGG" id="eca:ECA4067"/>
<dbReference type="PATRIC" id="fig|218491.5.peg.4135"/>
<dbReference type="eggNOG" id="COG3866">
    <property type="taxonomic scope" value="Bacteria"/>
</dbReference>
<dbReference type="HOGENOM" id="CLU_021894_2_1_6"/>
<dbReference type="OrthoDB" id="5592990at2"/>
<dbReference type="UniPathway" id="UPA00545">
    <property type="reaction ID" value="UER00824"/>
</dbReference>
<dbReference type="Proteomes" id="UP000007966">
    <property type="component" value="Chromosome"/>
</dbReference>
<dbReference type="GO" id="GO:0005576">
    <property type="term" value="C:extracellular region"/>
    <property type="evidence" value="ECO:0007669"/>
    <property type="project" value="UniProtKB-SubCell"/>
</dbReference>
<dbReference type="GO" id="GO:0046872">
    <property type="term" value="F:metal ion binding"/>
    <property type="evidence" value="ECO:0007669"/>
    <property type="project" value="UniProtKB-KW"/>
</dbReference>
<dbReference type="GO" id="GO:0030570">
    <property type="term" value="F:pectate lyase activity"/>
    <property type="evidence" value="ECO:0007669"/>
    <property type="project" value="UniProtKB-EC"/>
</dbReference>
<dbReference type="GO" id="GO:0045490">
    <property type="term" value="P:pectin catabolic process"/>
    <property type="evidence" value="ECO:0007669"/>
    <property type="project" value="UniProtKB-UniPathway"/>
</dbReference>
<dbReference type="Gene3D" id="2.160.20.10">
    <property type="entry name" value="Single-stranded right-handed beta-helix, Pectin lyase-like"/>
    <property type="match status" value="1"/>
</dbReference>
<dbReference type="InterPro" id="IPR002022">
    <property type="entry name" value="Pec_lyase"/>
</dbReference>
<dbReference type="InterPro" id="IPR012334">
    <property type="entry name" value="Pectin_lyas_fold"/>
</dbReference>
<dbReference type="InterPro" id="IPR011050">
    <property type="entry name" value="Pectin_lyase_fold/virulence"/>
</dbReference>
<dbReference type="InterPro" id="IPR045032">
    <property type="entry name" value="PEL"/>
</dbReference>
<dbReference type="PANTHER" id="PTHR31683">
    <property type="entry name" value="PECTATE LYASE 18-RELATED"/>
    <property type="match status" value="1"/>
</dbReference>
<dbReference type="PANTHER" id="PTHR31683:SF18">
    <property type="entry name" value="PECTATE LYASE 21-RELATED"/>
    <property type="match status" value="1"/>
</dbReference>
<dbReference type="Pfam" id="PF00544">
    <property type="entry name" value="Pectate_lyase_4"/>
    <property type="match status" value="1"/>
</dbReference>
<dbReference type="SMART" id="SM00656">
    <property type="entry name" value="Amb_all"/>
    <property type="match status" value="1"/>
</dbReference>
<dbReference type="SUPFAM" id="SSF51126">
    <property type="entry name" value="Pectin lyase-like"/>
    <property type="match status" value="1"/>
</dbReference>
<gene>
    <name type="primary">pel1</name>
    <name type="synonym">pelA</name>
    <name type="ordered locus">ECA4067</name>
</gene>
<organism>
    <name type="scientific">Pectobacterium atrosepticum (strain SCRI 1043 / ATCC BAA-672)</name>
    <name type="common">Erwinia carotovora subsp. atroseptica</name>
    <dbReference type="NCBI Taxonomy" id="218491"/>
    <lineage>
        <taxon>Bacteria</taxon>
        <taxon>Pseudomonadati</taxon>
        <taxon>Pseudomonadota</taxon>
        <taxon>Gammaproteobacteria</taxon>
        <taxon>Enterobacterales</taxon>
        <taxon>Pectobacteriaceae</taxon>
        <taxon>Pectobacterium</taxon>
    </lineage>
</organism>
<reference key="1">
    <citation type="journal article" date="1988" name="Gene">
        <title>Characterization of the Erwinia carotovora pelA gene and its product pectate lyase A.</title>
        <authorList>
            <person name="Lei S.-P."/>
            <person name="Lin H.-C."/>
            <person name="Wang S.-S."/>
            <person name="Wilcox G."/>
        </authorList>
    </citation>
    <scope>NUCLEOTIDE SEQUENCE [GENOMIC DNA]</scope>
    <scope>PROTEIN SEQUENCE OF 23-36</scope>
    <source>
        <strain>EC</strain>
    </source>
</reference>
<reference key="2">
    <citation type="journal article" date="1995" name="Microbiology">
        <title>Synergism between Erwinia pectate lyase isoenzymes that depolymerize both pectate and pectin.</title>
        <authorList>
            <person name="Bartling S."/>
            <person name="Wegener C."/>
            <person name="Olsen O."/>
        </authorList>
    </citation>
    <scope>NUCLEOTIDE SEQUENCE [GENOMIC DNA]</scope>
    <source>
        <strain>C18</strain>
    </source>
</reference>
<reference key="3">
    <citation type="journal article" date="2004" name="Proc. Natl. Acad. Sci. U.S.A.">
        <title>Genome sequence of the enterobacterial phytopathogen Erwinia carotovora subsp. atroseptica and characterization of virulence factors.</title>
        <authorList>
            <person name="Bell K.S."/>
            <person name="Sebaihia M."/>
            <person name="Pritchard L."/>
            <person name="Holden M.T.G."/>
            <person name="Hyman L.J."/>
            <person name="Holeva M.C."/>
            <person name="Thomson N.R."/>
            <person name="Bentley S.D."/>
            <person name="Churcher L.J.C."/>
            <person name="Mungall K."/>
            <person name="Atkin R."/>
            <person name="Bason N."/>
            <person name="Brooks K."/>
            <person name="Chillingworth T."/>
            <person name="Clark K."/>
            <person name="Doggett J."/>
            <person name="Fraser A."/>
            <person name="Hance Z."/>
            <person name="Hauser H."/>
            <person name="Jagels K."/>
            <person name="Moule S."/>
            <person name="Norbertczak H."/>
            <person name="Ormond D."/>
            <person name="Price C."/>
            <person name="Quail M.A."/>
            <person name="Sanders M."/>
            <person name="Walker D."/>
            <person name="Whitehead S."/>
            <person name="Salmond G.P.C."/>
            <person name="Birch P.R.J."/>
            <person name="Parkhill J."/>
            <person name="Toth I.K."/>
        </authorList>
    </citation>
    <scope>NUCLEOTIDE SEQUENCE [LARGE SCALE GENOMIC DNA]</scope>
    <source>
        <strain>SCRI 1043 / ATCC BAA-672</strain>
    </source>
</reference>
<name>PLY1_PECAS</name>
<evidence type="ECO:0000250" key="1"/>
<evidence type="ECO:0000255" key="2"/>
<evidence type="ECO:0000269" key="3">
    <source>
    </source>
</evidence>
<evidence type="ECO:0000305" key="4"/>
<proteinExistence type="evidence at protein level"/>
<comment type="function">
    <text>Involved in maceration and soft-rotting of plant tissue.</text>
</comment>
<comment type="catalytic activity">
    <reaction>
        <text>Eliminative cleavage of (1-&gt;4)-alpha-D-galacturonan to give oligosaccharides with 4-deoxy-alpha-D-galact-4-enuronosyl groups at their non-reducing ends.</text>
        <dbReference type="EC" id="4.2.2.2"/>
    </reaction>
</comment>
<comment type="cofactor">
    <cofactor evidence="1">
        <name>Ca(2+)</name>
        <dbReference type="ChEBI" id="CHEBI:29108"/>
    </cofactor>
    <text evidence="1">Binds 1 Ca(2+) ion per subunit.</text>
</comment>
<comment type="pathway">
    <text>Glycan metabolism; pectin degradation; 2-dehydro-3-deoxy-D-gluconate from pectin: step 2/5.</text>
</comment>
<comment type="subcellular location">
    <subcellularLocation>
        <location>Secreted</location>
    </subcellularLocation>
</comment>
<comment type="similarity">
    <text evidence="4">Belongs to the polysaccharide lyase 1 family. PLADES subfamily.</text>
</comment>
<comment type="sequence caution" evidence="4">
    <conflict type="erroneous initiation">
        <sequence resource="EMBL-CDS" id="AAA24845"/>
    </conflict>
</comment>